<keyword id="KW-0066">ATP synthesis</keyword>
<keyword id="KW-1003">Cell membrane</keyword>
<keyword id="KW-0138">CF(0)</keyword>
<keyword id="KW-0375">Hydrogen ion transport</keyword>
<keyword id="KW-0406">Ion transport</keyword>
<keyword id="KW-0472">Membrane</keyword>
<keyword id="KW-0915">Sodium</keyword>
<keyword id="KW-0739">Sodium transport</keyword>
<keyword id="KW-0812">Transmembrane</keyword>
<keyword id="KW-1133">Transmembrane helix</keyword>
<keyword id="KW-0813">Transport</keyword>
<reference key="1">
    <citation type="journal article" date="1990" name="Nucleic Acids Res.">
        <title>Sequence of subunits a and b of the sodium ion translocating adenosine triphosphate synthase of Propionigenium modestum.</title>
        <authorList>
            <person name="Kaim G.W."/>
            <person name="Ludwig W."/>
            <person name="Dimroth P."/>
            <person name="Schleifer K.H."/>
        </authorList>
    </citation>
    <scope>NUCLEOTIDE SEQUENCE [GENOMIC DNA]</scope>
    <source>
        <strain>DSM 2376 / Gra Succ2</strain>
    </source>
</reference>
<reference key="2">
    <citation type="journal article" date="1992" name="Eur. J. Biochem.">
        <title>Cloning, sequencing and in vivo expression of genes encoding the F0 part of the sodium-ion-dependent ATP synthase of Propionigenium modestum in Escherichia coli.</title>
        <authorList>
            <person name="Kaim G.W."/>
            <person name="Ludwig W."/>
            <person name="Dimroth P."/>
            <person name="Schleifer K.H."/>
        </authorList>
    </citation>
    <scope>NUCLEOTIDE SEQUENCE [GENOMIC DNA]</scope>
    <source>
        <strain>DSM 2376 / Gra Succ2</strain>
    </source>
</reference>
<reference key="3">
    <citation type="journal article" date="1990" name="Nucleic Acids Res.">
        <title>Nucleotide sequence of the F0 subunits of the sodium dependent F1F0 ATPase of Propionigenium modestum.</title>
        <authorList>
            <person name="Esser U."/>
            <person name="Krumholz L.R."/>
            <person name="Simoni R.D."/>
        </authorList>
    </citation>
    <scope>NUCLEOTIDE SEQUENCE [GENOMIC DNA]</scope>
    <source>
        <strain>DSM 2376 / Gra Succ2</strain>
    </source>
</reference>
<reference key="4">
    <citation type="journal article" date="1992" name="FEMS Microbiol. Lett.">
        <title>Characterization of the genes coding for the F1F0 subunits of the sodium dependent ATPase of Propionigenium modestum.</title>
        <authorList>
            <person name="Krumholz L.R."/>
            <person name="Esser U."/>
            <person name="Simoni R.D."/>
        </authorList>
    </citation>
    <scope>DISCUSSION OF SEQUENCE</scope>
</reference>
<gene>
    <name evidence="1" type="primary">atpB</name>
    <name type="synonym">uncB</name>
</gene>
<protein>
    <recommendedName>
        <fullName evidence="1">ATP synthase subunit a, sodium ion specific</fullName>
    </recommendedName>
    <alternativeName>
        <fullName evidence="1">ATP synthase F0 sector subunit a</fullName>
    </alternativeName>
    <alternativeName>
        <fullName evidence="1">F-ATPase subunit 6</fullName>
    </alternativeName>
</protein>
<comment type="function">
    <text>Key component of the proton channel; it plays a direct role in the translocation of protons across the membrane.</text>
</comment>
<comment type="subunit">
    <text>F-type ATPases have 2 components, CF(1) - the catalytic core - and CF(0) - the membrane proton channel. CF(1) has five subunits: alpha(3), beta(3), gamma(1), delta(1), epsilon(1). CF(0) has three main subunits: a(1), b(2) and c(9-12). The alpha and beta chains form an alternating ring which encloses part of the gamma chain. CF(1) is attached to CF(0) by a central stalk formed by the gamma and epsilon chains, while a peripheral stalk is formed by the delta and b chains.</text>
</comment>
<comment type="subcellular location">
    <subcellularLocation>
        <location>Cell membrane</location>
        <topology>Multi-pass membrane protein</topology>
    </subcellularLocation>
</comment>
<comment type="miscellaneous">
    <text>The ATPase of P.modestum is of special interest because it uses sodium ions instead of protons as the physiological coupling ion.</text>
</comment>
<comment type="similarity">
    <text evidence="1">Belongs to the ATPase A chain family.</text>
</comment>
<sequence>MKKMGPIILAVVIAIGTFALKMMGVIGFKTPPLVEGPKIMFYVPLPEAMHDFPFAMEMASGVYGFPVTITVISTWFVMLFLIMVFRWSSKNLEVVPERKQAFFETIYGFLDDLYGQLLGNWKKKYFTYIGTLFLFLLISNIVSFFPIPGFSSENGVFSIAPALRTPTADLNTTVGLALLTTYSFIAASFRTSGFFGFFKGLFEPMPLMFPINLAGEFAKPTNISIRLFGNMFAGMVILGLLYKAAPVLIPAPLHLYFDLFSGVVQSFVFIMLTMVYIQGSIGDAEYLED</sequence>
<organism>
    <name type="scientific">Propionigenium modestum</name>
    <dbReference type="NCBI Taxonomy" id="2333"/>
    <lineage>
        <taxon>Bacteria</taxon>
        <taxon>Fusobacteriati</taxon>
        <taxon>Fusobacteriota</taxon>
        <taxon>Fusobacteriia</taxon>
        <taxon>Fusobacteriales</taxon>
        <taxon>Fusobacteriaceae</taxon>
        <taxon>Propionigenium</taxon>
    </lineage>
</organism>
<proteinExistence type="inferred from homology"/>
<name>ATP6_PROMO</name>
<evidence type="ECO:0000255" key="1">
    <source>
        <dbReference type="HAMAP-Rule" id="MF_01393"/>
    </source>
</evidence>
<evidence type="ECO:0000305" key="2"/>
<dbReference type="EMBL" id="X54809">
    <property type="protein sequence ID" value="CAA38579.1"/>
    <property type="molecule type" value="Genomic_DNA"/>
</dbReference>
<dbReference type="EMBL" id="X66102">
    <property type="protein sequence ID" value="CAA46894.1"/>
    <property type="molecule type" value="Genomic_DNA"/>
</dbReference>
<dbReference type="EMBL" id="X53960">
    <property type="protein sequence ID" value="CAA37911.1"/>
    <property type="molecule type" value="Genomic_DNA"/>
</dbReference>
<dbReference type="EMBL" id="X58461">
    <property type="protein sequence ID" value="CAA41368.1"/>
    <property type="molecule type" value="Genomic_DNA"/>
</dbReference>
<dbReference type="PIR" id="S12619">
    <property type="entry name" value="S12619"/>
</dbReference>
<dbReference type="SMR" id="P21903"/>
<dbReference type="TCDB" id="3.A.2.1.2">
    <property type="family name" value="the h+- or na+-translocating f-type, v-type and a-type atpase (f-atpase) superfamily"/>
</dbReference>
<dbReference type="GO" id="GO:0005886">
    <property type="term" value="C:plasma membrane"/>
    <property type="evidence" value="ECO:0007669"/>
    <property type="project" value="UniProtKB-SubCell"/>
</dbReference>
<dbReference type="GO" id="GO:0045259">
    <property type="term" value="C:proton-transporting ATP synthase complex"/>
    <property type="evidence" value="ECO:0007669"/>
    <property type="project" value="UniProtKB-KW"/>
</dbReference>
<dbReference type="GO" id="GO:0046933">
    <property type="term" value="F:proton-transporting ATP synthase activity, rotational mechanism"/>
    <property type="evidence" value="ECO:0007669"/>
    <property type="project" value="UniProtKB-UniRule"/>
</dbReference>
<dbReference type="GO" id="GO:0042777">
    <property type="term" value="P:proton motive force-driven plasma membrane ATP synthesis"/>
    <property type="evidence" value="ECO:0007669"/>
    <property type="project" value="TreeGrafter"/>
</dbReference>
<dbReference type="GO" id="GO:0006814">
    <property type="term" value="P:sodium ion transport"/>
    <property type="evidence" value="ECO:0007669"/>
    <property type="project" value="UniProtKB-KW"/>
</dbReference>
<dbReference type="CDD" id="cd00310">
    <property type="entry name" value="ATP-synt_Fo_a_6"/>
    <property type="match status" value="1"/>
</dbReference>
<dbReference type="Gene3D" id="1.20.120.220">
    <property type="entry name" value="ATP synthase, F0 complex, subunit A"/>
    <property type="match status" value="1"/>
</dbReference>
<dbReference type="HAMAP" id="MF_01393">
    <property type="entry name" value="ATP_synth_a_bact"/>
    <property type="match status" value="1"/>
</dbReference>
<dbReference type="InterPro" id="IPR045082">
    <property type="entry name" value="ATP_syn_F0_a_bact/chloroplast"/>
</dbReference>
<dbReference type="InterPro" id="IPR000568">
    <property type="entry name" value="ATP_synth_F0_asu"/>
</dbReference>
<dbReference type="InterPro" id="IPR023011">
    <property type="entry name" value="ATP_synth_F0_asu_AS"/>
</dbReference>
<dbReference type="InterPro" id="IPR035908">
    <property type="entry name" value="F0_ATP_A_sf"/>
</dbReference>
<dbReference type="NCBIfam" id="TIGR01131">
    <property type="entry name" value="ATP_synt_6_or_A"/>
    <property type="match status" value="1"/>
</dbReference>
<dbReference type="PANTHER" id="PTHR42823">
    <property type="entry name" value="ATP SYNTHASE SUBUNIT A, CHLOROPLASTIC"/>
    <property type="match status" value="1"/>
</dbReference>
<dbReference type="PANTHER" id="PTHR42823:SF3">
    <property type="entry name" value="ATP SYNTHASE SUBUNIT A, CHLOROPLASTIC"/>
    <property type="match status" value="1"/>
</dbReference>
<dbReference type="Pfam" id="PF00119">
    <property type="entry name" value="ATP-synt_A"/>
    <property type="match status" value="1"/>
</dbReference>
<dbReference type="PRINTS" id="PR00123">
    <property type="entry name" value="ATPASEA"/>
</dbReference>
<dbReference type="SUPFAM" id="SSF81336">
    <property type="entry name" value="F1F0 ATP synthase subunit A"/>
    <property type="match status" value="1"/>
</dbReference>
<dbReference type="PROSITE" id="PS00449">
    <property type="entry name" value="ATPASE_A"/>
    <property type="match status" value="1"/>
</dbReference>
<accession>P21903</accession>
<feature type="chain" id="PRO_0000082065" description="ATP synthase subunit a, sodium ion specific">
    <location>
        <begin position="1"/>
        <end position="289"/>
    </location>
</feature>
<feature type="transmembrane region" description="Helical" evidence="1">
    <location>
        <begin position="7"/>
        <end position="27"/>
    </location>
</feature>
<feature type="transmembrane region" description="Helical" evidence="1">
    <location>
        <begin position="65"/>
        <end position="85"/>
    </location>
</feature>
<feature type="transmembrane region" description="Helical" evidence="1">
    <location>
        <begin position="129"/>
        <end position="149"/>
    </location>
</feature>
<feature type="transmembrane region" description="Helical" evidence="1">
    <location>
        <begin position="169"/>
        <end position="189"/>
    </location>
</feature>
<feature type="transmembrane region" description="Helical" evidence="1">
    <location>
        <begin position="231"/>
        <end position="251"/>
    </location>
</feature>
<feature type="transmembrane region" description="Helical" evidence="1">
    <location>
        <begin position="257"/>
        <end position="277"/>
    </location>
</feature>
<feature type="sequence conflict" description="In Ref. 3; CAA37911/CAA41368." evidence="2" ref="3">
    <original>Y</original>
    <variation>I</variation>
    <location>
        <position position="114"/>
    </location>
</feature>